<dbReference type="EMBL" id="L77117">
    <property type="protein sequence ID" value="AAB98587.1"/>
    <property type="molecule type" value="Genomic_DNA"/>
</dbReference>
<dbReference type="PIR" id="A64374">
    <property type="entry name" value="A64374"/>
</dbReference>
<dbReference type="RefSeq" id="WP_010870097.1">
    <property type="nucleotide sequence ID" value="NC_000909.1"/>
</dbReference>
<dbReference type="SMR" id="P54051"/>
<dbReference type="FunCoup" id="P54051">
    <property type="interactions" value="132"/>
</dbReference>
<dbReference type="STRING" id="243232.MJ_0593"/>
<dbReference type="PaxDb" id="243232-MJ_0593"/>
<dbReference type="EnsemblBacteria" id="AAB98587">
    <property type="protein sequence ID" value="AAB98587"/>
    <property type="gene ID" value="MJ_0593"/>
</dbReference>
<dbReference type="GeneID" id="24891425"/>
<dbReference type="KEGG" id="mja:MJ_0593"/>
<dbReference type="eggNOG" id="arCOG04208">
    <property type="taxonomic scope" value="Archaea"/>
</dbReference>
<dbReference type="HOGENOM" id="CLU_141199_2_0_2"/>
<dbReference type="InParanoid" id="P54051"/>
<dbReference type="OrthoDB" id="372011at2157"/>
<dbReference type="PhylomeDB" id="P54051"/>
<dbReference type="Proteomes" id="UP000000805">
    <property type="component" value="Chromosome"/>
</dbReference>
<dbReference type="GO" id="GO:0022626">
    <property type="term" value="C:cytosolic ribosome"/>
    <property type="evidence" value="ECO:0000318"/>
    <property type="project" value="GO_Central"/>
</dbReference>
<dbReference type="GO" id="GO:1990904">
    <property type="term" value="C:ribonucleoprotein complex"/>
    <property type="evidence" value="ECO:0007669"/>
    <property type="project" value="UniProtKB-KW"/>
</dbReference>
<dbReference type="GO" id="GO:0070180">
    <property type="term" value="F:large ribosomal subunit rRNA binding"/>
    <property type="evidence" value="ECO:0007669"/>
    <property type="project" value="UniProtKB-UniRule"/>
</dbReference>
<dbReference type="GO" id="GO:0003735">
    <property type="term" value="F:structural constituent of ribosome"/>
    <property type="evidence" value="ECO:0000318"/>
    <property type="project" value="GO_Central"/>
</dbReference>
<dbReference type="GO" id="GO:0008270">
    <property type="term" value="F:zinc ion binding"/>
    <property type="evidence" value="ECO:0007669"/>
    <property type="project" value="UniProtKB-UniRule"/>
</dbReference>
<dbReference type="GO" id="GO:0006412">
    <property type="term" value="P:translation"/>
    <property type="evidence" value="ECO:0007669"/>
    <property type="project" value="UniProtKB-UniRule"/>
</dbReference>
<dbReference type="Gene3D" id="2.20.25.30">
    <property type="match status" value="1"/>
</dbReference>
<dbReference type="HAMAP" id="MF_00327">
    <property type="entry name" value="Ribosomal_eL43"/>
    <property type="match status" value="1"/>
</dbReference>
<dbReference type="InterPro" id="IPR011331">
    <property type="entry name" value="Ribosomal_eL37/eL43"/>
</dbReference>
<dbReference type="InterPro" id="IPR002674">
    <property type="entry name" value="Ribosomal_eL43"/>
</dbReference>
<dbReference type="InterPro" id="IPR050522">
    <property type="entry name" value="Ribosomal_protein_eL43"/>
</dbReference>
<dbReference type="InterPro" id="IPR011332">
    <property type="entry name" value="Ribosomal_zn-bd"/>
</dbReference>
<dbReference type="NCBIfam" id="TIGR00280">
    <property type="entry name" value="eL43_euk_arch"/>
    <property type="match status" value="1"/>
</dbReference>
<dbReference type="NCBIfam" id="NF003058">
    <property type="entry name" value="PRK03976.1"/>
    <property type="match status" value="1"/>
</dbReference>
<dbReference type="PANTHER" id="PTHR48129">
    <property type="entry name" value="60S RIBOSOMAL PROTEIN L37A"/>
    <property type="match status" value="1"/>
</dbReference>
<dbReference type="PANTHER" id="PTHR48129:SF1">
    <property type="entry name" value="LARGE RIBOSOMAL SUBUNIT PROTEIN EL43"/>
    <property type="match status" value="1"/>
</dbReference>
<dbReference type="Pfam" id="PF01780">
    <property type="entry name" value="Ribosomal_L37ae"/>
    <property type="match status" value="1"/>
</dbReference>
<dbReference type="SUPFAM" id="SSF57829">
    <property type="entry name" value="Zn-binding ribosomal proteins"/>
    <property type="match status" value="1"/>
</dbReference>
<protein>
    <recommendedName>
        <fullName evidence="1">Large ribosomal subunit protein eL43</fullName>
    </recommendedName>
    <alternativeName>
        <fullName evidence="2">50S ribosomal protein L37Ae</fullName>
    </alternativeName>
    <alternativeName>
        <fullName evidence="1">Ribosomal protein L43e</fullName>
    </alternativeName>
</protein>
<proteinExistence type="inferred from homology"/>
<organism>
    <name type="scientific">Methanocaldococcus jannaschii (strain ATCC 43067 / DSM 2661 / JAL-1 / JCM 10045 / NBRC 100440)</name>
    <name type="common">Methanococcus jannaschii</name>
    <dbReference type="NCBI Taxonomy" id="243232"/>
    <lineage>
        <taxon>Archaea</taxon>
        <taxon>Methanobacteriati</taxon>
        <taxon>Methanobacteriota</taxon>
        <taxon>Methanomada group</taxon>
        <taxon>Methanococci</taxon>
        <taxon>Methanococcales</taxon>
        <taxon>Methanocaldococcaceae</taxon>
        <taxon>Methanocaldococcus</taxon>
    </lineage>
</organism>
<evidence type="ECO:0000255" key="1">
    <source>
        <dbReference type="HAMAP-Rule" id="MF_00327"/>
    </source>
</evidence>
<evidence type="ECO:0000305" key="2"/>
<comment type="function">
    <text evidence="1">Binds to the 23S rRNA.</text>
</comment>
<comment type="cofactor">
    <cofactor evidence="1">
        <name>Zn(2+)</name>
        <dbReference type="ChEBI" id="CHEBI:29105"/>
    </cofactor>
    <text evidence="1">Binds 1 zinc ion per subunit.</text>
</comment>
<comment type="subunit">
    <text evidence="1">Part of the 50S ribosomal subunit.</text>
</comment>
<comment type="similarity">
    <text evidence="1">Belongs to the eukaryotic ribosomal protein eL43 family. Putative zinc-binding subfamily.</text>
</comment>
<sequence>MFSHTKKVGPTGRFGPRYGLKIRVRVRDVEIKAKKKYKCPVCGFPKLKRASTSIWVCGKCGAKIAGGAYTPETGAGKAVMKAIRRIVERKEE</sequence>
<keyword id="KW-0479">Metal-binding</keyword>
<keyword id="KW-1185">Reference proteome</keyword>
<keyword id="KW-0687">Ribonucleoprotein</keyword>
<keyword id="KW-0689">Ribosomal protein</keyword>
<keyword id="KW-0694">RNA-binding</keyword>
<keyword id="KW-0699">rRNA-binding</keyword>
<keyword id="KW-0862">Zinc</keyword>
<keyword id="KW-0863">Zinc-finger</keyword>
<feature type="chain" id="PRO_0000139843" description="Large ribosomal subunit protein eL43">
    <location>
        <begin position="1"/>
        <end position="92"/>
    </location>
</feature>
<feature type="zinc finger region" description="C4-type" evidence="1">
    <location>
        <begin position="39"/>
        <end position="60"/>
    </location>
</feature>
<feature type="binding site" evidence="1">
    <location>
        <position position="39"/>
    </location>
    <ligand>
        <name>Zn(2+)</name>
        <dbReference type="ChEBI" id="CHEBI:29105"/>
    </ligand>
</feature>
<feature type="binding site" evidence="1">
    <location>
        <position position="42"/>
    </location>
    <ligand>
        <name>Zn(2+)</name>
        <dbReference type="ChEBI" id="CHEBI:29105"/>
    </ligand>
</feature>
<feature type="binding site" evidence="1">
    <location>
        <position position="57"/>
    </location>
    <ligand>
        <name>Zn(2+)</name>
        <dbReference type="ChEBI" id="CHEBI:29105"/>
    </ligand>
</feature>
<feature type="binding site" evidence="1">
    <location>
        <position position="60"/>
    </location>
    <ligand>
        <name>Zn(2+)</name>
        <dbReference type="ChEBI" id="CHEBI:29105"/>
    </ligand>
</feature>
<accession>P54051</accession>
<gene>
    <name evidence="1" type="primary">rpl37ae</name>
    <name type="ordered locus">MJ0593</name>
</gene>
<reference key="1">
    <citation type="journal article" date="1996" name="Science">
        <title>Complete genome sequence of the methanogenic archaeon, Methanococcus jannaschii.</title>
        <authorList>
            <person name="Bult C.J."/>
            <person name="White O."/>
            <person name="Olsen G.J."/>
            <person name="Zhou L."/>
            <person name="Fleischmann R.D."/>
            <person name="Sutton G.G."/>
            <person name="Blake J.A."/>
            <person name="FitzGerald L.M."/>
            <person name="Clayton R.A."/>
            <person name="Gocayne J.D."/>
            <person name="Kerlavage A.R."/>
            <person name="Dougherty B.A."/>
            <person name="Tomb J.-F."/>
            <person name="Adams M.D."/>
            <person name="Reich C.I."/>
            <person name="Overbeek R."/>
            <person name="Kirkness E.F."/>
            <person name="Weinstock K.G."/>
            <person name="Merrick J.M."/>
            <person name="Glodek A."/>
            <person name="Scott J.L."/>
            <person name="Geoghagen N.S.M."/>
            <person name="Weidman J.F."/>
            <person name="Fuhrmann J.L."/>
            <person name="Nguyen D."/>
            <person name="Utterback T.R."/>
            <person name="Kelley J.M."/>
            <person name="Peterson J.D."/>
            <person name="Sadow P.W."/>
            <person name="Hanna M.C."/>
            <person name="Cotton M.D."/>
            <person name="Roberts K.M."/>
            <person name="Hurst M.A."/>
            <person name="Kaine B.P."/>
            <person name="Borodovsky M."/>
            <person name="Klenk H.-P."/>
            <person name="Fraser C.M."/>
            <person name="Smith H.O."/>
            <person name="Woese C.R."/>
            <person name="Venter J.C."/>
        </authorList>
    </citation>
    <scope>NUCLEOTIDE SEQUENCE [LARGE SCALE GENOMIC DNA]</scope>
    <source>
        <strain>ATCC 43067 / DSM 2661 / JAL-1 / JCM 10045 / NBRC 100440</strain>
    </source>
</reference>
<name>RL37A_METJA</name>